<proteinExistence type="evidence at protein level"/>
<feature type="chain" id="PRO_0000027215" description="Dipeptidyl peptidase 4 membrane form">
    <location>
        <begin position="1"/>
        <end position="760"/>
    </location>
</feature>
<feature type="chain" id="PRO_0000027216" description="Dipeptidyl peptidase 4 soluble form" evidence="1">
    <location>
        <begin position="37"/>
        <end position="760"/>
    </location>
</feature>
<feature type="topological domain" description="Cytoplasmic" evidence="3">
    <location>
        <begin position="1"/>
        <end position="6"/>
    </location>
</feature>
<feature type="transmembrane region" description="Helical; Signal-anchor for type II membrane protein" evidence="3">
    <location>
        <begin position="7"/>
        <end position="28"/>
    </location>
</feature>
<feature type="topological domain" description="Extracellular" evidence="3">
    <location>
        <begin position="29"/>
        <end position="760"/>
    </location>
</feature>
<feature type="active site" description="Charge relay system" evidence="5">
    <location>
        <position position="624"/>
    </location>
</feature>
<feature type="active site" description="Charge relay system" evidence="5">
    <location>
        <position position="702"/>
    </location>
</feature>
<feature type="active site" description="Charge relay system" evidence="5">
    <location>
        <position position="734"/>
    </location>
</feature>
<feature type="glycosylation site" description="N-linked (GlcNAc...) asparagine" evidence="1">
    <location>
        <position position="83"/>
    </location>
</feature>
<feature type="glycosylation site" description="N-linked (GlcNAc...) asparagine" evidence="1">
    <location>
        <position position="90"/>
    </location>
</feature>
<feature type="glycosylation site" description="N-linked (GlcNAc...) asparagine" evidence="4">
    <location>
        <position position="144"/>
    </location>
</feature>
<feature type="glycosylation site" description="N-linked (GlcNAc...) asparagine" evidence="3">
    <location>
        <position position="213"/>
    </location>
</feature>
<feature type="glycosylation site" description="N-linked (GlcNAc...) asparagine" evidence="1">
    <location>
        <position position="223"/>
    </location>
</feature>
<feature type="glycosylation site" description="N-linked (GlcNAc...) asparagine" evidence="1">
    <location>
        <position position="315"/>
    </location>
</feature>
<feature type="glycosylation site" description="N-linked (GlcNAc...) asparagine" evidence="3">
    <location>
        <position position="328"/>
    </location>
</feature>
<feature type="glycosylation site" description="N-linked (GlcNAc...) asparagine" evidence="6">
    <location>
        <position position="514"/>
    </location>
</feature>
<feature type="glycosylation site" description="N-linked (GlcNAc...) asparagine" evidence="1">
    <location>
        <position position="679"/>
    </location>
</feature>
<feature type="disulfide bond" evidence="1">
    <location>
        <begin position="322"/>
        <end position="333"/>
    </location>
</feature>
<feature type="disulfide bond" evidence="1">
    <location>
        <begin position="379"/>
        <end position="388"/>
    </location>
</feature>
<feature type="disulfide bond" evidence="1">
    <location>
        <begin position="438"/>
        <end position="441"/>
    </location>
</feature>
<feature type="disulfide bond" evidence="1">
    <location>
        <begin position="448"/>
        <end position="466"/>
    </location>
</feature>
<feature type="disulfide bond" evidence="1">
    <location>
        <begin position="643"/>
        <end position="756"/>
    </location>
</feature>
<evidence type="ECO:0000250" key="1"/>
<evidence type="ECO:0000250" key="2">
    <source>
        <dbReference type="UniProtKB" id="P27487"/>
    </source>
</evidence>
<evidence type="ECO:0000255" key="3"/>
<evidence type="ECO:0000255" key="4">
    <source>
        <dbReference type="PROSITE-ProRule" id="PRU00498"/>
    </source>
</evidence>
<evidence type="ECO:0000255" key="5">
    <source>
        <dbReference type="PROSITE-ProRule" id="PRU10084"/>
    </source>
</evidence>
<evidence type="ECO:0000269" key="6">
    <source>
    </source>
</evidence>
<evidence type="ECO:0000305" key="7"/>
<protein>
    <recommendedName>
        <fullName>Dipeptidyl peptidase 4</fullName>
        <ecNumber evidence="2">3.4.14.5</ecNumber>
    </recommendedName>
    <alternativeName>
        <fullName>Dipeptidyl peptidase IV</fullName>
        <shortName>DPP IV</shortName>
    </alternativeName>
    <alternativeName>
        <fullName>T-cell activation antigen CD26</fullName>
    </alternativeName>
    <alternativeName>
        <fullName>Thymocyte-activating molecule</fullName>
        <shortName>THAM</shortName>
    </alternativeName>
    <cdAntigenName>CD26</cdAntigenName>
    <component>
        <recommendedName>
            <fullName>Dipeptidyl peptidase 4 membrane form</fullName>
        </recommendedName>
        <alternativeName>
            <fullName>Dipeptidyl peptidase IV membrane form</fullName>
        </alternativeName>
    </component>
    <component>
        <recommendedName>
            <fullName>Dipeptidyl peptidase 4 soluble form</fullName>
        </recommendedName>
        <alternativeName>
            <fullName>Dipeptidyl peptidase IV soluble form</fullName>
        </alternativeName>
    </component>
</protein>
<accession>P28843</accession>
<accession>Q3U514</accession>
<comment type="function">
    <text evidence="2">Cell surface glycoprotein receptor involved in the costimulatory signal essential for T-cell receptor (TCR)-mediated T-cell activation. Acts as a positive regulator of T-cell coactivation, by binding at least ADA, CAV1, IGF2R, and PTPRC. Its binding to CAV1 and CARD11 induces T-cell proliferation and NF-kappa-B activation in a T-cell receptor/CD3-dependent manner. Its interaction with ADA also regulates lymphocyte-epithelial cell adhesion. In association with FAP is involved in the pericellular proteolysis of the extracellular matrix (ECM), the migration and invasion of endothelial cells into the ECM. May be involved in the promotion of lymphatic endothelial cells adhesion, migration and tube formation. When overexpressed, enhanced cell proliferation, a process inhibited by GPC3. Also acts as a serine exopeptidase with a dipeptidyl peptidase activity that regulates various physiological processes by cleaving peptides in the circulation, including many chemokines, mitogenic growth factors, neuropeptides and peptide hormones. Removes N-terminal dipeptides sequentially from polypeptides having unsubstituted N-termini provided that the penultimate residue is proline.</text>
</comment>
<comment type="catalytic activity">
    <reaction evidence="2 5">
        <text>Release of an N-terminal dipeptide, Xaa-Yaa-|-Zaa-, from a polypeptide, preferentially when Yaa is Pro, provided Zaa is neither Pro nor hydroxyproline.</text>
        <dbReference type="EC" id="3.4.14.5"/>
    </reaction>
</comment>
<comment type="activity regulation">
    <text evidence="1">Inhibited by GPC3 and diprotin A.</text>
</comment>
<comment type="subunit">
    <text evidence="2">Monomer. Homodimer. Heterodimer with Seprase (FAP). Requires homodimerization for optimal dipeptidyl peptidase activity and T-cell costimulation. Found in a membrane raft complex, at least composed of BCL10, CARD11, DPP4 and IKBKB. Associates with collagen. Interacts with PTPRC; the interaction is enhanced in an interleukin-12-dependent manner in activated lymphocytes. Interacts (via extracellular domain) with ADA; does not inhibit its dipeptidyl peptidase activity. Interacts with CAV1 (via the N-terminus); the interaction is direct. Interacts (via cytoplasmic tail) with CARD11 (via PDZ domain); its homodimerization is necessary for interaction with CARD11. Interacts with IGF2R; the interaction is direct. Interacts with GPC3.</text>
</comment>
<comment type="subcellular location">
    <molecule>Dipeptidyl peptidase 4 soluble form</molecule>
    <subcellularLocation>
        <location>Secreted</location>
    </subcellularLocation>
    <text evidence="1">Detected in the serum and the seminal fluid.</text>
</comment>
<comment type="subcellular location">
    <subcellularLocation>
        <location>Cell membrane</location>
        <topology>Single-pass type II membrane protein</topology>
    </subcellularLocation>
    <subcellularLocation>
        <location evidence="1">Apical cell membrane</location>
        <topology evidence="1">Single-pass type II membrane protein</topology>
    </subcellularLocation>
    <subcellularLocation>
        <location evidence="1">Cell projection</location>
        <location evidence="1">Invadopodium membrane</location>
        <topology evidence="1">Single-pass type II membrane protein</topology>
    </subcellularLocation>
    <subcellularLocation>
        <location evidence="1">Cell projection</location>
        <location evidence="1">Lamellipodium membrane</location>
        <topology evidence="1">Single-pass type II membrane protein</topology>
    </subcellularLocation>
    <subcellularLocation>
        <location evidence="1">Cell junction</location>
    </subcellularLocation>
    <subcellularLocation>
        <location evidence="1">Membrane raft</location>
    </subcellularLocation>
    <text evidence="1">Translocated to the apical membrane through the concerted action of N- and O-Glycans and its association with lipid microdomains containing cholesterol and sphingolipids. Redistributed to membrane rafts in T-cell in an interleukin-12-dependent activation. Its interaction with CAV1 is necessary for its translocation to membrane rafts. Colocalized with PTPRC in membrane rafts. Colocalized with FAP in invadopodia and lamellipodia of migratory activated endothelial cells in collagenous matrix. Colocalized with FAP on endothelial cells of capillary-like microvessels but not large vessels within invasive breast ductal carcinoma. Colocalized with ADA at the cell junction in lymphocyte-epithelial cell adhesion. Colocalized with IGF2R in internalized cytoplasmic vesicles adjacent to the cell surface (By similarity).</text>
</comment>
<comment type="PTM">
    <text evidence="1">The soluble form (Dipeptidyl peptidase 4 soluble form also named SDPP) derives from the membrane form (Dipeptidyl peptidase 4 membrane form also named MDPP) by proteolytic processing.</text>
</comment>
<comment type="PTM">
    <text evidence="1">N- and O-Glycosylated.</text>
</comment>
<comment type="PTM">
    <text evidence="1">Phosphorylated. Mannose 6-phosphate residues in the carbohydrate moiety are necessary for interaction with IGF2R in activated T-cells. Mannose 6-phosphorylation is induced during T-cell activation (By similarity).</text>
</comment>
<comment type="similarity">
    <text evidence="7">Belongs to the peptidase S9B family. DPPIV subfamily.</text>
</comment>
<keyword id="KW-0031">Aminopeptidase</keyword>
<keyword id="KW-0130">Cell adhesion</keyword>
<keyword id="KW-0965">Cell junction</keyword>
<keyword id="KW-1003">Cell membrane</keyword>
<keyword id="KW-0966">Cell projection</keyword>
<keyword id="KW-0903">Direct protein sequencing</keyword>
<keyword id="KW-1015">Disulfide bond</keyword>
<keyword id="KW-0325">Glycoprotein</keyword>
<keyword id="KW-0378">Hydrolase</keyword>
<keyword id="KW-0472">Membrane</keyword>
<keyword id="KW-0645">Protease</keyword>
<keyword id="KW-0675">Receptor</keyword>
<keyword id="KW-1185">Reference proteome</keyword>
<keyword id="KW-0964">Secreted</keyword>
<keyword id="KW-0720">Serine protease</keyword>
<keyword id="KW-0735">Signal-anchor</keyword>
<keyword id="KW-0812">Transmembrane</keyword>
<keyword id="KW-1133">Transmembrane helix</keyword>
<sequence>MKTPWKVLLGLLGVAALVTIITVPIVLLSKDEAAADSRRTYSLADYLKSTFRVKSYSLWWVSDFEYLYKQENNILLLNAEHGNSSIFLENSTFESFGYHSVSPDRLFVLLEYNYVKQWRHSYTASYNIYDVNKRQLITEEKIPNNTQWITWSPEGHKLAYVWKNDIYVKVEPHLPSHRITSTGEENVIYNGITDWVYEEEVFGAYSALWWSPNNTFLAYAQFNDTGVPLIEYSFYSDESLQYPKTVWIPYPKAGAVNPTVKFFIVNIDSLSSSSSAAPIQIPAPASVARGDHYLCDVVWATEERISLQWLRRIQNYSVMAICDYDKINLTWNCPSEQQHVEMSTTGWVGRFRPAEPHFTSDGSSFYKIISDKDGYKHICHFPKDKKDCTFITKGAWEVISIEALTSDYLYYISNQYKEMPGGRNLYKIQLTDHTNVKCLSCDLNPERCQYYAVSFSKEAKYYQLGCWGPGLPLYTLHRSTDHKELRVLEDNSALDRMLQDVQMPSKKLDFIVLNETRFWYQMILPPHFDKSKKYPLLLDVYAGPCSQKADASFRLNWATYLASTENIIVASFDGRGSGYQGDKIMHAINRRLGTLEVEDQIEAARQFVKMGFVDSKRVAIWGWSYGGYVTSMVLGSGSGVFKCGIAVAPVSRWEYYDSVYTERYMGLPIPEDNLDHYRNSTVMSRAEHFKQVEYLLIHGTADDNVHFQQSAQISKALVDAGVDFQAMWYTDEDHGIASSTAHQHIYSHMSHFLQQCFSLH</sequence>
<dbReference type="EC" id="3.4.14.5" evidence="2"/>
<dbReference type="EMBL" id="X58384">
    <property type="protein sequence ID" value="CAA41274.1"/>
    <property type="molecule type" value="mRNA"/>
</dbReference>
<dbReference type="EMBL" id="U12620">
    <property type="protein sequence ID" value="AAA82213.1"/>
    <property type="molecule type" value="Genomic_DNA"/>
</dbReference>
<dbReference type="EMBL" id="U12599">
    <property type="protein sequence ID" value="AAA82213.1"/>
    <property type="status" value="JOINED"/>
    <property type="molecule type" value="Genomic_DNA"/>
</dbReference>
<dbReference type="EMBL" id="U12600">
    <property type="protein sequence ID" value="AAA82213.1"/>
    <property type="status" value="JOINED"/>
    <property type="molecule type" value="Genomic_DNA"/>
</dbReference>
<dbReference type="EMBL" id="U12601">
    <property type="protein sequence ID" value="AAA82213.1"/>
    <property type="status" value="JOINED"/>
    <property type="molecule type" value="Genomic_DNA"/>
</dbReference>
<dbReference type="EMBL" id="U12602">
    <property type="protein sequence ID" value="AAA82213.1"/>
    <property type="status" value="JOINED"/>
    <property type="molecule type" value="Genomic_DNA"/>
</dbReference>
<dbReference type="EMBL" id="U12603">
    <property type="protein sequence ID" value="AAA82213.1"/>
    <property type="status" value="JOINED"/>
    <property type="molecule type" value="Genomic_DNA"/>
</dbReference>
<dbReference type="EMBL" id="U12604">
    <property type="protein sequence ID" value="AAA82213.1"/>
    <property type="status" value="JOINED"/>
    <property type="molecule type" value="Genomic_DNA"/>
</dbReference>
<dbReference type="EMBL" id="U12605">
    <property type="protein sequence ID" value="AAA82213.1"/>
    <property type="status" value="JOINED"/>
    <property type="molecule type" value="Genomic_DNA"/>
</dbReference>
<dbReference type="EMBL" id="U12606">
    <property type="protein sequence ID" value="AAA82213.1"/>
    <property type="status" value="JOINED"/>
    <property type="molecule type" value="Genomic_DNA"/>
</dbReference>
<dbReference type="EMBL" id="U12607">
    <property type="protein sequence ID" value="AAA82213.1"/>
    <property type="status" value="JOINED"/>
    <property type="molecule type" value="Genomic_DNA"/>
</dbReference>
<dbReference type="EMBL" id="U12608">
    <property type="protein sequence ID" value="AAA82213.1"/>
    <property type="status" value="JOINED"/>
    <property type="molecule type" value="Genomic_DNA"/>
</dbReference>
<dbReference type="EMBL" id="U12609">
    <property type="protein sequence ID" value="AAA82213.1"/>
    <property type="status" value="JOINED"/>
    <property type="molecule type" value="Genomic_DNA"/>
</dbReference>
<dbReference type="EMBL" id="U12610">
    <property type="protein sequence ID" value="AAA82213.1"/>
    <property type="status" value="JOINED"/>
    <property type="molecule type" value="Genomic_DNA"/>
</dbReference>
<dbReference type="EMBL" id="U12611">
    <property type="protein sequence ID" value="AAA82213.1"/>
    <property type="status" value="JOINED"/>
    <property type="molecule type" value="Genomic_DNA"/>
</dbReference>
<dbReference type="EMBL" id="U12612">
    <property type="protein sequence ID" value="AAA82213.1"/>
    <property type="status" value="JOINED"/>
    <property type="molecule type" value="Genomic_DNA"/>
</dbReference>
<dbReference type="EMBL" id="U12613">
    <property type="protein sequence ID" value="AAA82213.1"/>
    <property type="status" value="JOINED"/>
    <property type="molecule type" value="Genomic_DNA"/>
</dbReference>
<dbReference type="EMBL" id="U12614">
    <property type="protein sequence ID" value="AAA82213.1"/>
    <property type="status" value="JOINED"/>
    <property type="molecule type" value="Genomic_DNA"/>
</dbReference>
<dbReference type="EMBL" id="U12615">
    <property type="protein sequence ID" value="AAA82213.1"/>
    <property type="status" value="JOINED"/>
    <property type="molecule type" value="Genomic_DNA"/>
</dbReference>
<dbReference type="EMBL" id="U12616">
    <property type="protein sequence ID" value="AAA82213.1"/>
    <property type="status" value="JOINED"/>
    <property type="molecule type" value="Genomic_DNA"/>
</dbReference>
<dbReference type="EMBL" id="U12617">
    <property type="protein sequence ID" value="AAA82213.1"/>
    <property type="status" value="JOINED"/>
    <property type="molecule type" value="Genomic_DNA"/>
</dbReference>
<dbReference type="EMBL" id="U12618">
    <property type="protein sequence ID" value="AAA82213.1"/>
    <property type="status" value="JOINED"/>
    <property type="molecule type" value="Genomic_DNA"/>
</dbReference>
<dbReference type="EMBL" id="U12619">
    <property type="protein sequence ID" value="AAA82213.1"/>
    <property type="status" value="JOINED"/>
    <property type="molecule type" value="Genomic_DNA"/>
</dbReference>
<dbReference type="EMBL" id="AK085370">
    <property type="protein sequence ID" value="BAC39434.1"/>
    <property type="molecule type" value="mRNA"/>
</dbReference>
<dbReference type="EMBL" id="AK153939">
    <property type="protein sequence ID" value="BAE32266.1"/>
    <property type="molecule type" value="mRNA"/>
</dbReference>
<dbReference type="EMBL" id="BC022183">
    <property type="protein sequence ID" value="AAH22183.1"/>
    <property type="molecule type" value="mRNA"/>
</dbReference>
<dbReference type="CCDS" id="CCDS16065.1"/>
<dbReference type="PIR" id="S23752">
    <property type="entry name" value="S23752"/>
</dbReference>
<dbReference type="RefSeq" id="NP_001153015.1">
    <property type="nucleotide sequence ID" value="NM_001159543.1"/>
</dbReference>
<dbReference type="RefSeq" id="NP_034204.1">
    <property type="nucleotide sequence ID" value="NM_010074.3"/>
</dbReference>
<dbReference type="SMR" id="P28843"/>
<dbReference type="BioGRID" id="199300">
    <property type="interactions" value="9"/>
</dbReference>
<dbReference type="FunCoup" id="P28843">
    <property type="interactions" value="603"/>
</dbReference>
<dbReference type="IntAct" id="P28843">
    <property type="interactions" value="1"/>
</dbReference>
<dbReference type="STRING" id="10090.ENSMUSP00000044050"/>
<dbReference type="BindingDB" id="P28843"/>
<dbReference type="ChEMBL" id="CHEMBL3883"/>
<dbReference type="DrugCentral" id="P28843"/>
<dbReference type="ESTHER" id="mouse-dpp4">
    <property type="family name" value="DPP4N_Peptidase_S9"/>
</dbReference>
<dbReference type="MEROPS" id="S09.003"/>
<dbReference type="GlyCosmos" id="P28843">
    <property type="glycosylation" value="9 sites, No reported glycans"/>
</dbReference>
<dbReference type="GlyGen" id="P28843">
    <property type="glycosylation" value="11 sites, 2 N-linked glycans (2 sites), 1 O-linked glycan (1 site)"/>
</dbReference>
<dbReference type="iPTMnet" id="P28843"/>
<dbReference type="PhosphoSitePlus" id="P28843"/>
<dbReference type="SwissPalm" id="P28843"/>
<dbReference type="jPOST" id="P28843"/>
<dbReference type="PaxDb" id="10090-ENSMUSP00000044050"/>
<dbReference type="PeptideAtlas" id="P28843"/>
<dbReference type="ProteomicsDB" id="279479"/>
<dbReference type="ABCD" id="P28843">
    <property type="antibodies" value="1 sequenced antibody"/>
</dbReference>
<dbReference type="Antibodypedia" id="19093">
    <property type="antibodies" value="1791 antibodies from 46 providers"/>
</dbReference>
<dbReference type="DNASU" id="13482"/>
<dbReference type="Ensembl" id="ENSMUST00000047812.8">
    <property type="protein sequence ID" value="ENSMUSP00000044050.8"/>
    <property type="gene ID" value="ENSMUSG00000035000.9"/>
</dbReference>
<dbReference type="GeneID" id="13482"/>
<dbReference type="KEGG" id="mmu:13482"/>
<dbReference type="UCSC" id="uc008jvg.2">
    <property type="organism name" value="mouse"/>
</dbReference>
<dbReference type="AGR" id="MGI:94919"/>
<dbReference type="CTD" id="1803"/>
<dbReference type="MGI" id="MGI:94919">
    <property type="gene designation" value="Dpp4"/>
</dbReference>
<dbReference type="VEuPathDB" id="HostDB:ENSMUSG00000035000"/>
<dbReference type="eggNOG" id="KOG2100">
    <property type="taxonomic scope" value="Eukaryota"/>
</dbReference>
<dbReference type="GeneTree" id="ENSGT00940000161291"/>
<dbReference type="HOGENOM" id="CLU_006105_4_3_1"/>
<dbReference type="InParanoid" id="P28843"/>
<dbReference type="OMA" id="NYDMHIF"/>
<dbReference type="OrthoDB" id="16520at2759"/>
<dbReference type="PhylomeDB" id="P28843"/>
<dbReference type="TreeFam" id="TF313309"/>
<dbReference type="BRENDA" id="3.4.14.5">
    <property type="organism ID" value="3474"/>
</dbReference>
<dbReference type="Reactome" id="R-MMU-381771">
    <property type="pathway name" value="Synthesis, secretion, and inactivation of Glucagon-like Peptide-1 (GLP-1)"/>
</dbReference>
<dbReference type="Reactome" id="R-MMU-400511">
    <property type="pathway name" value="Synthesis, secretion, and inactivation of Glucose-dependent Insulinotropic Polypeptide (GIP)"/>
</dbReference>
<dbReference type="BioGRID-ORCS" id="13482">
    <property type="hits" value="1 hit in 76 CRISPR screens"/>
</dbReference>
<dbReference type="ChiTaRS" id="Dpp4">
    <property type="organism name" value="mouse"/>
</dbReference>
<dbReference type="PRO" id="PR:P28843"/>
<dbReference type="Proteomes" id="UP000000589">
    <property type="component" value="Chromosome 2"/>
</dbReference>
<dbReference type="RNAct" id="P28843">
    <property type="molecule type" value="protein"/>
</dbReference>
<dbReference type="Bgee" id="ENSMUSG00000035000">
    <property type="expression patterns" value="Expressed in small intestine Peyer's patch and 184 other cell types or tissues"/>
</dbReference>
<dbReference type="GO" id="GO:0016324">
    <property type="term" value="C:apical plasma membrane"/>
    <property type="evidence" value="ECO:0007669"/>
    <property type="project" value="UniProtKB-SubCell"/>
</dbReference>
<dbReference type="GO" id="GO:0009986">
    <property type="term" value="C:cell surface"/>
    <property type="evidence" value="ECO:0000250"/>
    <property type="project" value="UniProtKB"/>
</dbReference>
<dbReference type="GO" id="GO:0030139">
    <property type="term" value="C:endocytic vesicle"/>
    <property type="evidence" value="ECO:0000250"/>
    <property type="project" value="UniProtKB"/>
</dbReference>
<dbReference type="GO" id="GO:0005576">
    <property type="term" value="C:extracellular region"/>
    <property type="evidence" value="ECO:0007669"/>
    <property type="project" value="UniProtKB-SubCell"/>
</dbReference>
<dbReference type="GO" id="GO:0046581">
    <property type="term" value="C:intercellular canaliculus"/>
    <property type="evidence" value="ECO:0000314"/>
    <property type="project" value="MGI"/>
</dbReference>
<dbReference type="GO" id="GO:0030027">
    <property type="term" value="C:lamellipodium"/>
    <property type="evidence" value="ECO:0000250"/>
    <property type="project" value="UniProtKB"/>
</dbReference>
<dbReference type="GO" id="GO:0031258">
    <property type="term" value="C:lamellipodium membrane"/>
    <property type="evidence" value="ECO:0007669"/>
    <property type="project" value="UniProtKB-SubCell"/>
</dbReference>
<dbReference type="GO" id="GO:0045121">
    <property type="term" value="C:membrane raft"/>
    <property type="evidence" value="ECO:0007669"/>
    <property type="project" value="UniProtKB-SubCell"/>
</dbReference>
<dbReference type="GO" id="GO:0004177">
    <property type="term" value="F:aminopeptidase activity"/>
    <property type="evidence" value="ECO:0007669"/>
    <property type="project" value="UniProtKB-KW"/>
</dbReference>
<dbReference type="GO" id="GO:0045499">
    <property type="term" value="F:chemorepellent activity"/>
    <property type="evidence" value="ECO:0007669"/>
    <property type="project" value="Ensembl"/>
</dbReference>
<dbReference type="GO" id="GO:0008239">
    <property type="term" value="F:dipeptidyl-peptidase activity"/>
    <property type="evidence" value="ECO:0000250"/>
    <property type="project" value="UniProtKB"/>
</dbReference>
<dbReference type="GO" id="GO:0002020">
    <property type="term" value="F:protease binding"/>
    <property type="evidence" value="ECO:0000250"/>
    <property type="project" value="UniProtKB"/>
</dbReference>
<dbReference type="GO" id="GO:0042803">
    <property type="term" value="F:protein homodimerization activity"/>
    <property type="evidence" value="ECO:0000250"/>
    <property type="project" value="UniProtKB"/>
</dbReference>
<dbReference type="GO" id="GO:0004252">
    <property type="term" value="F:serine-type endopeptidase activity"/>
    <property type="evidence" value="ECO:0007669"/>
    <property type="project" value="InterPro"/>
</dbReference>
<dbReference type="GO" id="GO:0005102">
    <property type="term" value="F:signaling receptor binding"/>
    <property type="evidence" value="ECO:0000250"/>
    <property type="project" value="UniProtKB"/>
</dbReference>
<dbReference type="GO" id="GO:0001618">
    <property type="term" value="F:virus receptor activity"/>
    <property type="evidence" value="ECO:0007669"/>
    <property type="project" value="Ensembl"/>
</dbReference>
<dbReference type="GO" id="GO:0001662">
    <property type="term" value="P:behavioral fear response"/>
    <property type="evidence" value="ECO:0000315"/>
    <property type="project" value="MGI"/>
</dbReference>
<dbReference type="GO" id="GO:0007155">
    <property type="term" value="P:cell adhesion"/>
    <property type="evidence" value="ECO:0007669"/>
    <property type="project" value="UniProtKB-KW"/>
</dbReference>
<dbReference type="GO" id="GO:0043542">
    <property type="term" value="P:endothelial cell migration"/>
    <property type="evidence" value="ECO:0000250"/>
    <property type="project" value="UniProtKB"/>
</dbReference>
<dbReference type="GO" id="GO:0035641">
    <property type="term" value="P:locomotory exploration behavior"/>
    <property type="evidence" value="ECO:0000315"/>
    <property type="project" value="MGI"/>
</dbReference>
<dbReference type="GO" id="GO:0010716">
    <property type="term" value="P:negative regulation of extracellular matrix disassembly"/>
    <property type="evidence" value="ECO:0000250"/>
    <property type="project" value="UniProtKB"/>
</dbReference>
<dbReference type="GO" id="GO:0090024">
    <property type="term" value="P:negative regulation of neutrophil chemotaxis"/>
    <property type="evidence" value="ECO:0007669"/>
    <property type="project" value="Ensembl"/>
</dbReference>
<dbReference type="GO" id="GO:0008284">
    <property type="term" value="P:positive regulation of cell population proliferation"/>
    <property type="evidence" value="ECO:0000250"/>
    <property type="project" value="UniProtKB"/>
</dbReference>
<dbReference type="GO" id="GO:0006508">
    <property type="term" value="P:proteolysis"/>
    <property type="evidence" value="ECO:0007669"/>
    <property type="project" value="UniProtKB-KW"/>
</dbReference>
<dbReference type="GO" id="GO:0036343">
    <property type="term" value="P:psychomotor behavior"/>
    <property type="evidence" value="ECO:0000315"/>
    <property type="project" value="MGI"/>
</dbReference>
<dbReference type="GO" id="GO:0033632">
    <property type="term" value="P:regulation of cell-cell adhesion mediated by integrin"/>
    <property type="evidence" value="ECO:0007669"/>
    <property type="project" value="Ensembl"/>
</dbReference>
<dbReference type="GO" id="GO:0001666">
    <property type="term" value="P:response to hypoxia"/>
    <property type="evidence" value="ECO:0007669"/>
    <property type="project" value="Ensembl"/>
</dbReference>
<dbReference type="GO" id="GO:0042110">
    <property type="term" value="P:T cell activation"/>
    <property type="evidence" value="ECO:0007669"/>
    <property type="project" value="Ensembl"/>
</dbReference>
<dbReference type="GO" id="GO:0031295">
    <property type="term" value="P:T cell costimulation"/>
    <property type="evidence" value="ECO:0000250"/>
    <property type="project" value="UniProtKB"/>
</dbReference>
<dbReference type="FunFam" id="2.140.10.30:FF:000001">
    <property type="entry name" value="Dipeptidyl peptidase 4"/>
    <property type="match status" value="1"/>
</dbReference>
<dbReference type="FunFam" id="3.40.50.1820:FF:000003">
    <property type="entry name" value="Dipeptidyl peptidase 4"/>
    <property type="match status" value="1"/>
</dbReference>
<dbReference type="Gene3D" id="3.40.50.1820">
    <property type="entry name" value="alpha/beta hydrolase"/>
    <property type="match status" value="1"/>
</dbReference>
<dbReference type="Gene3D" id="2.140.10.30">
    <property type="entry name" value="Dipeptidylpeptidase IV, N-terminal domain"/>
    <property type="match status" value="1"/>
</dbReference>
<dbReference type="InterPro" id="IPR029058">
    <property type="entry name" value="AB_hydrolase_fold"/>
</dbReference>
<dbReference type="InterPro" id="IPR040522">
    <property type="entry name" value="DPPIV_rep"/>
</dbReference>
<dbReference type="InterPro" id="IPR002471">
    <property type="entry name" value="Pept_S9_AS"/>
</dbReference>
<dbReference type="InterPro" id="IPR001375">
    <property type="entry name" value="Peptidase_S9_cat"/>
</dbReference>
<dbReference type="InterPro" id="IPR002469">
    <property type="entry name" value="Peptidase_S9B_N"/>
</dbReference>
<dbReference type="InterPro" id="IPR050278">
    <property type="entry name" value="Serine_Prot_S9B/DPPIV"/>
</dbReference>
<dbReference type="PANTHER" id="PTHR11731:SF128">
    <property type="entry name" value="DIPEPTIDYL PEPTIDASE 4"/>
    <property type="match status" value="1"/>
</dbReference>
<dbReference type="PANTHER" id="PTHR11731">
    <property type="entry name" value="PROTEASE FAMILY S9B,C DIPEPTIDYL-PEPTIDASE IV-RELATED"/>
    <property type="match status" value="1"/>
</dbReference>
<dbReference type="Pfam" id="PF00930">
    <property type="entry name" value="DPPIV_N"/>
    <property type="match status" value="1"/>
</dbReference>
<dbReference type="Pfam" id="PF18811">
    <property type="entry name" value="DPPIV_rep"/>
    <property type="match status" value="1"/>
</dbReference>
<dbReference type="Pfam" id="PF00326">
    <property type="entry name" value="Peptidase_S9"/>
    <property type="match status" value="1"/>
</dbReference>
<dbReference type="SUPFAM" id="SSF53474">
    <property type="entry name" value="alpha/beta-Hydrolases"/>
    <property type="match status" value="1"/>
</dbReference>
<dbReference type="SUPFAM" id="SSF82171">
    <property type="entry name" value="DPP6 N-terminal domain-like"/>
    <property type="match status" value="1"/>
</dbReference>
<dbReference type="PROSITE" id="PS00708">
    <property type="entry name" value="PRO_ENDOPEP_SER"/>
    <property type="match status" value="1"/>
</dbReference>
<reference key="1">
    <citation type="journal article" date="1992" name="J. Biol. Chem.">
        <title>cDNA cloning for mouse thymocyte-activating molecule. A multifunctional ecto-dipeptidyl peptidase IV (CD26) included in a subgroup of serine proteases.</title>
        <authorList>
            <person name="Marguet D.A."/>
            <person name="Bernard A.-M."/>
            <person name="Vivier I."/>
            <person name="Darmoul D."/>
            <person name="Naquet P."/>
            <person name="Pierres M."/>
        </authorList>
    </citation>
    <scope>NUCLEOTIDE SEQUENCE [MRNA]</scope>
    <source>
        <strain>SWR/J</strain>
        <tissue>Thymus</tissue>
    </source>
</reference>
<reference key="2">
    <citation type="submission" date="1994-09" db="EMBL/GenBank/DDBJ databases">
        <authorList>
            <person name="Marguet D.A."/>
        </authorList>
    </citation>
    <scope>SEQUENCE REVISION</scope>
</reference>
<reference key="3">
    <citation type="journal article" date="1994" name="Biochemistry">
        <title>Structure of the mouse dipeptidyl peptidase IV (CD26) gene.</title>
        <authorList>
            <person name="Bernard A.-M."/>
            <person name="Mattei M.-G."/>
            <person name="Pierres M."/>
            <person name="Marguet D."/>
        </authorList>
    </citation>
    <scope>NUCLEOTIDE SEQUENCE [GENOMIC DNA]</scope>
    <source>
        <strain>B10.A</strain>
        <tissue>Liver</tissue>
    </source>
</reference>
<reference key="4">
    <citation type="journal article" date="2005" name="Science">
        <title>The transcriptional landscape of the mammalian genome.</title>
        <authorList>
            <person name="Carninci P."/>
            <person name="Kasukawa T."/>
            <person name="Katayama S."/>
            <person name="Gough J."/>
            <person name="Frith M.C."/>
            <person name="Maeda N."/>
            <person name="Oyama R."/>
            <person name="Ravasi T."/>
            <person name="Lenhard B."/>
            <person name="Wells C."/>
            <person name="Kodzius R."/>
            <person name="Shimokawa K."/>
            <person name="Bajic V.B."/>
            <person name="Brenner S.E."/>
            <person name="Batalov S."/>
            <person name="Forrest A.R."/>
            <person name="Zavolan M."/>
            <person name="Davis M.J."/>
            <person name="Wilming L.G."/>
            <person name="Aidinis V."/>
            <person name="Allen J.E."/>
            <person name="Ambesi-Impiombato A."/>
            <person name="Apweiler R."/>
            <person name="Aturaliya R.N."/>
            <person name="Bailey T.L."/>
            <person name="Bansal M."/>
            <person name="Baxter L."/>
            <person name="Beisel K.W."/>
            <person name="Bersano T."/>
            <person name="Bono H."/>
            <person name="Chalk A.M."/>
            <person name="Chiu K.P."/>
            <person name="Choudhary V."/>
            <person name="Christoffels A."/>
            <person name="Clutterbuck D.R."/>
            <person name="Crowe M.L."/>
            <person name="Dalla E."/>
            <person name="Dalrymple B.P."/>
            <person name="de Bono B."/>
            <person name="Della Gatta G."/>
            <person name="di Bernardo D."/>
            <person name="Down T."/>
            <person name="Engstrom P."/>
            <person name="Fagiolini M."/>
            <person name="Faulkner G."/>
            <person name="Fletcher C.F."/>
            <person name="Fukushima T."/>
            <person name="Furuno M."/>
            <person name="Futaki S."/>
            <person name="Gariboldi M."/>
            <person name="Georgii-Hemming P."/>
            <person name="Gingeras T.R."/>
            <person name="Gojobori T."/>
            <person name="Green R.E."/>
            <person name="Gustincich S."/>
            <person name="Harbers M."/>
            <person name="Hayashi Y."/>
            <person name="Hensch T.K."/>
            <person name="Hirokawa N."/>
            <person name="Hill D."/>
            <person name="Huminiecki L."/>
            <person name="Iacono M."/>
            <person name="Ikeo K."/>
            <person name="Iwama A."/>
            <person name="Ishikawa T."/>
            <person name="Jakt M."/>
            <person name="Kanapin A."/>
            <person name="Katoh M."/>
            <person name="Kawasawa Y."/>
            <person name="Kelso J."/>
            <person name="Kitamura H."/>
            <person name="Kitano H."/>
            <person name="Kollias G."/>
            <person name="Krishnan S.P."/>
            <person name="Kruger A."/>
            <person name="Kummerfeld S.K."/>
            <person name="Kurochkin I.V."/>
            <person name="Lareau L.F."/>
            <person name="Lazarevic D."/>
            <person name="Lipovich L."/>
            <person name="Liu J."/>
            <person name="Liuni S."/>
            <person name="McWilliam S."/>
            <person name="Madan Babu M."/>
            <person name="Madera M."/>
            <person name="Marchionni L."/>
            <person name="Matsuda H."/>
            <person name="Matsuzawa S."/>
            <person name="Miki H."/>
            <person name="Mignone F."/>
            <person name="Miyake S."/>
            <person name="Morris K."/>
            <person name="Mottagui-Tabar S."/>
            <person name="Mulder N."/>
            <person name="Nakano N."/>
            <person name="Nakauchi H."/>
            <person name="Ng P."/>
            <person name="Nilsson R."/>
            <person name="Nishiguchi S."/>
            <person name="Nishikawa S."/>
            <person name="Nori F."/>
            <person name="Ohara O."/>
            <person name="Okazaki Y."/>
            <person name="Orlando V."/>
            <person name="Pang K.C."/>
            <person name="Pavan W.J."/>
            <person name="Pavesi G."/>
            <person name="Pesole G."/>
            <person name="Petrovsky N."/>
            <person name="Piazza S."/>
            <person name="Reed J."/>
            <person name="Reid J.F."/>
            <person name="Ring B.Z."/>
            <person name="Ringwald M."/>
            <person name="Rost B."/>
            <person name="Ruan Y."/>
            <person name="Salzberg S.L."/>
            <person name="Sandelin A."/>
            <person name="Schneider C."/>
            <person name="Schoenbach C."/>
            <person name="Sekiguchi K."/>
            <person name="Semple C.A."/>
            <person name="Seno S."/>
            <person name="Sessa L."/>
            <person name="Sheng Y."/>
            <person name="Shibata Y."/>
            <person name="Shimada H."/>
            <person name="Shimada K."/>
            <person name="Silva D."/>
            <person name="Sinclair B."/>
            <person name="Sperling S."/>
            <person name="Stupka E."/>
            <person name="Sugiura K."/>
            <person name="Sultana R."/>
            <person name="Takenaka Y."/>
            <person name="Taki K."/>
            <person name="Tammoja K."/>
            <person name="Tan S.L."/>
            <person name="Tang S."/>
            <person name="Taylor M.S."/>
            <person name="Tegner J."/>
            <person name="Teichmann S.A."/>
            <person name="Ueda H.R."/>
            <person name="van Nimwegen E."/>
            <person name="Verardo R."/>
            <person name="Wei C.L."/>
            <person name="Yagi K."/>
            <person name="Yamanishi H."/>
            <person name="Zabarovsky E."/>
            <person name="Zhu S."/>
            <person name="Zimmer A."/>
            <person name="Hide W."/>
            <person name="Bult C."/>
            <person name="Grimmond S.M."/>
            <person name="Teasdale R.D."/>
            <person name="Liu E.T."/>
            <person name="Brusic V."/>
            <person name="Quackenbush J."/>
            <person name="Wahlestedt C."/>
            <person name="Mattick J.S."/>
            <person name="Hume D.A."/>
            <person name="Kai C."/>
            <person name="Sasaki D."/>
            <person name="Tomaru Y."/>
            <person name="Fukuda S."/>
            <person name="Kanamori-Katayama M."/>
            <person name="Suzuki M."/>
            <person name="Aoki J."/>
            <person name="Arakawa T."/>
            <person name="Iida J."/>
            <person name="Imamura K."/>
            <person name="Itoh M."/>
            <person name="Kato T."/>
            <person name="Kawaji H."/>
            <person name="Kawagashira N."/>
            <person name="Kawashima T."/>
            <person name="Kojima M."/>
            <person name="Kondo S."/>
            <person name="Konno H."/>
            <person name="Nakano K."/>
            <person name="Ninomiya N."/>
            <person name="Nishio T."/>
            <person name="Okada M."/>
            <person name="Plessy C."/>
            <person name="Shibata K."/>
            <person name="Shiraki T."/>
            <person name="Suzuki S."/>
            <person name="Tagami M."/>
            <person name="Waki K."/>
            <person name="Watahiki A."/>
            <person name="Okamura-Oho Y."/>
            <person name="Suzuki H."/>
            <person name="Kawai J."/>
            <person name="Hayashizaki Y."/>
        </authorList>
    </citation>
    <scope>NUCLEOTIDE SEQUENCE [LARGE SCALE MRNA]</scope>
    <source>
        <strain>C57BL/6J</strain>
        <strain>NOD</strain>
        <tissue>Kidney</tissue>
        <tissue>Thymus</tissue>
    </source>
</reference>
<reference key="5">
    <citation type="journal article" date="2004" name="Genome Res.">
        <title>The status, quality, and expansion of the NIH full-length cDNA project: the Mammalian Gene Collection (MGC).</title>
        <authorList>
            <consortium name="The MGC Project Team"/>
        </authorList>
    </citation>
    <scope>NUCLEOTIDE SEQUENCE [LARGE SCALE MRNA]</scope>
</reference>
<reference key="6">
    <citation type="journal article" date="1991" name="J. Immunol.">
        <title>Evidence that thymocyte-activating molecule is mouse CD26 (dipeptidyl peptidase IV).</title>
        <authorList>
            <person name="Vivier I."/>
            <person name="Marguet D.A."/>
            <person name="Naquet P."/>
            <person name="Bonicel J."/>
            <person name="Black D."/>
            <person name="Li C.X.-Y."/>
            <person name="Bernard A.-M."/>
            <person name="Gorvel J.-P."/>
            <person name="Pierres M."/>
        </authorList>
    </citation>
    <scope>PROTEIN SEQUENCE OF 1-20</scope>
</reference>
<reference key="7">
    <citation type="journal article" date="2009" name="Nat. Biotechnol.">
        <title>Mass-spectrometric identification and relative quantification of N-linked cell surface glycoproteins.</title>
        <authorList>
            <person name="Wollscheid B."/>
            <person name="Bausch-Fluck D."/>
            <person name="Henderson C."/>
            <person name="O'Brien R."/>
            <person name="Bibel M."/>
            <person name="Schiess R."/>
            <person name="Aebersold R."/>
            <person name="Watts J.D."/>
        </authorList>
    </citation>
    <scope>GLYCOSYLATION [LARGE SCALE ANALYSIS] AT ASN-514</scope>
</reference>
<reference key="8">
    <citation type="journal article" date="2010" name="Cell">
        <title>A tissue-specific atlas of mouse protein phosphorylation and expression.</title>
        <authorList>
            <person name="Huttlin E.L."/>
            <person name="Jedrychowski M.P."/>
            <person name="Elias J.E."/>
            <person name="Goswami T."/>
            <person name="Rad R."/>
            <person name="Beausoleil S.A."/>
            <person name="Villen J."/>
            <person name="Haas W."/>
            <person name="Sowa M.E."/>
            <person name="Gygi S.P."/>
        </authorList>
    </citation>
    <scope>IDENTIFICATION BY MASS SPECTROMETRY [LARGE SCALE ANALYSIS]</scope>
    <source>
        <tissue>Brown adipose tissue</tissue>
        <tissue>Heart</tissue>
        <tissue>Kidney</tissue>
        <tissue>Liver</tissue>
        <tissue>Lung</tissue>
        <tissue>Pancreas</tissue>
        <tissue>Spleen</tissue>
    </source>
</reference>
<organism>
    <name type="scientific">Mus musculus</name>
    <name type="common">Mouse</name>
    <dbReference type="NCBI Taxonomy" id="10090"/>
    <lineage>
        <taxon>Eukaryota</taxon>
        <taxon>Metazoa</taxon>
        <taxon>Chordata</taxon>
        <taxon>Craniata</taxon>
        <taxon>Vertebrata</taxon>
        <taxon>Euteleostomi</taxon>
        <taxon>Mammalia</taxon>
        <taxon>Eutheria</taxon>
        <taxon>Euarchontoglires</taxon>
        <taxon>Glires</taxon>
        <taxon>Rodentia</taxon>
        <taxon>Myomorpha</taxon>
        <taxon>Muroidea</taxon>
        <taxon>Muridae</taxon>
        <taxon>Murinae</taxon>
        <taxon>Mus</taxon>
        <taxon>Mus</taxon>
    </lineage>
</organism>
<name>DPP4_MOUSE</name>
<gene>
    <name type="primary">Dpp4</name>
    <name type="synonym">Cd26</name>
</gene>